<comment type="function">
    <text evidence="1">Catalyzes the NAD-dependent reduction of succinylglutamate semialdehyde into succinylglutamate.</text>
</comment>
<comment type="catalytic activity">
    <reaction evidence="1">
        <text>N-succinyl-L-glutamate 5-semialdehyde + NAD(+) + H2O = N-succinyl-L-glutamate + NADH + 2 H(+)</text>
        <dbReference type="Rhea" id="RHEA:10812"/>
        <dbReference type="ChEBI" id="CHEBI:15377"/>
        <dbReference type="ChEBI" id="CHEBI:15378"/>
        <dbReference type="ChEBI" id="CHEBI:57540"/>
        <dbReference type="ChEBI" id="CHEBI:57945"/>
        <dbReference type="ChEBI" id="CHEBI:58520"/>
        <dbReference type="ChEBI" id="CHEBI:58763"/>
        <dbReference type="EC" id="1.2.1.71"/>
    </reaction>
</comment>
<comment type="pathway">
    <text evidence="1">Amino-acid degradation; L-arginine degradation via AST pathway; L-glutamate and succinate from L-arginine: step 4/5.</text>
</comment>
<comment type="similarity">
    <text evidence="1">Belongs to the aldehyde dehydrogenase family. AstD subfamily.</text>
</comment>
<organism>
    <name type="scientific">Pseudoalteromonas atlantica (strain T6c / ATCC BAA-1087)</name>
    <dbReference type="NCBI Taxonomy" id="3042615"/>
    <lineage>
        <taxon>Bacteria</taxon>
        <taxon>Pseudomonadati</taxon>
        <taxon>Pseudomonadota</taxon>
        <taxon>Gammaproteobacteria</taxon>
        <taxon>Alteromonadales</taxon>
        <taxon>Alteromonadaceae</taxon>
        <taxon>Paraglaciecola</taxon>
    </lineage>
</organism>
<evidence type="ECO:0000255" key="1">
    <source>
        <dbReference type="HAMAP-Rule" id="MF_01174"/>
    </source>
</evidence>
<reference key="1">
    <citation type="submission" date="2006-06" db="EMBL/GenBank/DDBJ databases">
        <title>Complete sequence of Pseudoalteromonas atlantica T6c.</title>
        <authorList>
            <consortium name="US DOE Joint Genome Institute"/>
            <person name="Copeland A."/>
            <person name="Lucas S."/>
            <person name="Lapidus A."/>
            <person name="Barry K."/>
            <person name="Detter J.C."/>
            <person name="Glavina del Rio T."/>
            <person name="Hammon N."/>
            <person name="Israni S."/>
            <person name="Dalin E."/>
            <person name="Tice H."/>
            <person name="Pitluck S."/>
            <person name="Saunders E."/>
            <person name="Brettin T."/>
            <person name="Bruce D."/>
            <person name="Han C."/>
            <person name="Tapia R."/>
            <person name="Gilna P."/>
            <person name="Schmutz J."/>
            <person name="Larimer F."/>
            <person name="Land M."/>
            <person name="Hauser L."/>
            <person name="Kyrpides N."/>
            <person name="Kim E."/>
            <person name="Karls A.C."/>
            <person name="Bartlett D."/>
            <person name="Higgins B.P."/>
            <person name="Richardson P."/>
        </authorList>
    </citation>
    <scope>NUCLEOTIDE SEQUENCE [LARGE SCALE GENOMIC DNA]</scope>
    <source>
        <strain>T6c / ATCC BAA-1087</strain>
    </source>
</reference>
<protein>
    <recommendedName>
        <fullName evidence="1">N-succinylglutamate 5-semialdehyde dehydrogenase</fullName>
        <ecNumber evidence="1">1.2.1.71</ecNumber>
    </recommendedName>
    <alternativeName>
        <fullName evidence="1">Succinylglutamic semialdehyde dehydrogenase</fullName>
        <shortName evidence="1">SGSD</shortName>
    </alternativeName>
</protein>
<feature type="chain" id="PRO_0000262411" description="N-succinylglutamate 5-semialdehyde dehydrogenase">
    <location>
        <begin position="1"/>
        <end position="490"/>
    </location>
</feature>
<feature type="active site" evidence="1">
    <location>
        <position position="246"/>
    </location>
</feature>
<feature type="active site" evidence="1">
    <location>
        <position position="280"/>
    </location>
</feature>
<feature type="binding site" evidence="1">
    <location>
        <begin position="223"/>
        <end position="228"/>
    </location>
    <ligand>
        <name>NAD(+)</name>
        <dbReference type="ChEBI" id="CHEBI:57540"/>
    </ligand>
</feature>
<accession>Q15Y60</accession>
<name>ASTD_PSEA6</name>
<dbReference type="EC" id="1.2.1.71" evidence="1"/>
<dbReference type="EMBL" id="CP000388">
    <property type="protein sequence ID" value="ABG39178.1"/>
    <property type="molecule type" value="Genomic_DNA"/>
</dbReference>
<dbReference type="RefSeq" id="WP_011573541.1">
    <property type="nucleotide sequence ID" value="NC_008228.1"/>
</dbReference>
<dbReference type="SMR" id="Q15Y60"/>
<dbReference type="STRING" id="342610.Patl_0649"/>
<dbReference type="KEGG" id="pat:Patl_0649"/>
<dbReference type="eggNOG" id="COG1012">
    <property type="taxonomic scope" value="Bacteria"/>
</dbReference>
<dbReference type="HOGENOM" id="CLU_005391_1_0_6"/>
<dbReference type="OrthoDB" id="9812625at2"/>
<dbReference type="UniPathway" id="UPA00185">
    <property type="reaction ID" value="UER00282"/>
</dbReference>
<dbReference type="Proteomes" id="UP000001981">
    <property type="component" value="Chromosome"/>
</dbReference>
<dbReference type="GO" id="GO:0043824">
    <property type="term" value="F:succinylglutamate-semialdehyde dehydrogenase activity"/>
    <property type="evidence" value="ECO:0007669"/>
    <property type="project" value="UniProtKB-EC"/>
</dbReference>
<dbReference type="GO" id="GO:0019544">
    <property type="term" value="P:arginine catabolic process to glutamate"/>
    <property type="evidence" value="ECO:0007669"/>
    <property type="project" value="UniProtKB-UniRule"/>
</dbReference>
<dbReference type="GO" id="GO:0019545">
    <property type="term" value="P:arginine catabolic process to succinate"/>
    <property type="evidence" value="ECO:0007669"/>
    <property type="project" value="UniProtKB-UniRule"/>
</dbReference>
<dbReference type="CDD" id="cd07095">
    <property type="entry name" value="ALDH_SGSD_AstD"/>
    <property type="match status" value="1"/>
</dbReference>
<dbReference type="FunFam" id="3.40.605.10:FF:000010">
    <property type="entry name" value="N-succinylglutamate 5-semialdehyde dehydrogenase"/>
    <property type="match status" value="1"/>
</dbReference>
<dbReference type="Gene3D" id="3.40.605.10">
    <property type="entry name" value="Aldehyde Dehydrogenase, Chain A, domain 1"/>
    <property type="match status" value="1"/>
</dbReference>
<dbReference type="Gene3D" id="3.40.309.10">
    <property type="entry name" value="Aldehyde Dehydrogenase, Chain A, domain 2"/>
    <property type="match status" value="1"/>
</dbReference>
<dbReference type="HAMAP" id="MF_01174">
    <property type="entry name" value="Aldedh_AstD"/>
    <property type="match status" value="1"/>
</dbReference>
<dbReference type="InterPro" id="IPR016161">
    <property type="entry name" value="Ald_DH/histidinol_DH"/>
</dbReference>
<dbReference type="InterPro" id="IPR016163">
    <property type="entry name" value="Ald_DH_C"/>
</dbReference>
<dbReference type="InterPro" id="IPR016160">
    <property type="entry name" value="Ald_DH_CS_CYS"/>
</dbReference>
<dbReference type="InterPro" id="IPR029510">
    <property type="entry name" value="Ald_DH_CS_GLU"/>
</dbReference>
<dbReference type="InterPro" id="IPR016162">
    <property type="entry name" value="Ald_DH_N"/>
</dbReference>
<dbReference type="InterPro" id="IPR015590">
    <property type="entry name" value="Aldehyde_DH_dom"/>
</dbReference>
<dbReference type="InterPro" id="IPR017649">
    <property type="entry name" value="SuccinylGlu_semiald_DH_AstD"/>
</dbReference>
<dbReference type="NCBIfam" id="TIGR03240">
    <property type="entry name" value="arg_catab_astD"/>
    <property type="match status" value="1"/>
</dbReference>
<dbReference type="NCBIfam" id="NF006992">
    <property type="entry name" value="PRK09457.1"/>
    <property type="match status" value="1"/>
</dbReference>
<dbReference type="PANTHER" id="PTHR11699">
    <property type="entry name" value="ALDEHYDE DEHYDROGENASE-RELATED"/>
    <property type="match status" value="1"/>
</dbReference>
<dbReference type="Pfam" id="PF00171">
    <property type="entry name" value="Aldedh"/>
    <property type="match status" value="1"/>
</dbReference>
<dbReference type="SUPFAM" id="SSF53720">
    <property type="entry name" value="ALDH-like"/>
    <property type="match status" value="1"/>
</dbReference>
<dbReference type="PROSITE" id="PS00070">
    <property type="entry name" value="ALDEHYDE_DEHYDR_CYS"/>
    <property type="match status" value="1"/>
</dbReference>
<dbReference type="PROSITE" id="PS00687">
    <property type="entry name" value="ALDEHYDE_DEHYDR_GLU"/>
    <property type="match status" value="1"/>
</dbReference>
<keyword id="KW-0056">Arginine metabolism</keyword>
<keyword id="KW-0520">NAD</keyword>
<keyword id="KW-0560">Oxidoreductase</keyword>
<sequence>MTQQTHFIAGQWHAGQGHDIESIDPAKKRQIWQAKSASSEQVNQAVSSARKATVTWAACTFEQRLAYVKRFGELLAENKDMLALTIAQETGKPLWETATEVGAMMGKIGISERAYQERTGLVENPMPVGKAFIRHKPHGVVAVFGPYNFPGHLPNGHIVPALLAGNCIVFKPSDLTPLVAERTVQLWEKAGLPKGVLNLVQGEVETGKALAAHPDLDGLFFTGSSRTGKILHEQYAGHPGKILALEMGGNNPLIVKDISDIDATVHDIIQSAFVTSGQRCTCARKLFLENNTQGDAILARLIEVTKNIKVGDYDADEQPFMGAMISKNAAHAMVMAQQQLLDLGATSLVELTHLDPESGFVSPGIIDVTAMVEQMPDDEHFGPLLKVVRFDDFDRAISLGNNTKFGLSAGLLSDSEDLYQHFYQRIRAGIVNWNRPITGASGAAPFGGVGESGNHRASAYYAADYCAYPVASVELEKVTLPGNLNPGLNF</sequence>
<proteinExistence type="inferred from homology"/>
<gene>
    <name evidence="1" type="primary">astD</name>
    <name type="ordered locus">Patl_0649</name>
</gene>